<name>PTBP1_ARATH</name>
<evidence type="ECO:0000250" key="1"/>
<evidence type="ECO:0000255" key="2">
    <source>
        <dbReference type="PROSITE-ProRule" id="PRU00176"/>
    </source>
</evidence>
<evidence type="ECO:0000256" key="3">
    <source>
        <dbReference type="SAM" id="MobiDB-lite"/>
    </source>
</evidence>
<evidence type="ECO:0000305" key="4"/>
<evidence type="ECO:0007744" key="5">
    <source>
    </source>
</evidence>
<reference key="1">
    <citation type="online journal article" date="1998" name="Plant Gene Register">
        <title>Nucleotide sequence of an Arabidopsis cDNA encoding a protein with similarity to mammalian polypyrimidine tract-binding protein (PTB).</title>
        <authorList>
            <person name="Marin C."/>
            <person name="Boronat A."/>
        </authorList>
        <locator>PGR98-157</locator>
    </citation>
    <scope>NUCLEOTIDE SEQUENCE [MRNA]</scope>
    <source>
        <strain>cv. Columbia</strain>
    </source>
</reference>
<reference key="2">
    <citation type="journal article" date="2000" name="Nature">
        <title>Sequence and analysis of chromosome 3 of the plant Arabidopsis thaliana.</title>
        <authorList>
            <person name="Salanoubat M."/>
            <person name="Lemcke K."/>
            <person name="Rieger M."/>
            <person name="Ansorge W."/>
            <person name="Unseld M."/>
            <person name="Fartmann B."/>
            <person name="Valle G."/>
            <person name="Bloecker H."/>
            <person name="Perez-Alonso M."/>
            <person name="Obermaier B."/>
            <person name="Delseny M."/>
            <person name="Boutry M."/>
            <person name="Grivell L.A."/>
            <person name="Mache R."/>
            <person name="Puigdomenech P."/>
            <person name="De Simone V."/>
            <person name="Choisne N."/>
            <person name="Artiguenave F."/>
            <person name="Robert C."/>
            <person name="Brottier P."/>
            <person name="Wincker P."/>
            <person name="Cattolico L."/>
            <person name="Weissenbach J."/>
            <person name="Saurin W."/>
            <person name="Quetier F."/>
            <person name="Schaefer M."/>
            <person name="Mueller-Auer S."/>
            <person name="Gabel C."/>
            <person name="Fuchs M."/>
            <person name="Benes V."/>
            <person name="Wurmbach E."/>
            <person name="Drzonek H."/>
            <person name="Erfle H."/>
            <person name="Jordan N."/>
            <person name="Bangert S."/>
            <person name="Wiedelmann R."/>
            <person name="Kranz H."/>
            <person name="Voss H."/>
            <person name="Holland R."/>
            <person name="Brandt P."/>
            <person name="Nyakatura G."/>
            <person name="Vezzi A."/>
            <person name="D'Angelo M."/>
            <person name="Pallavicini A."/>
            <person name="Toppo S."/>
            <person name="Simionati B."/>
            <person name="Conrad A."/>
            <person name="Hornischer K."/>
            <person name="Kauer G."/>
            <person name="Loehnert T.-H."/>
            <person name="Nordsiek G."/>
            <person name="Reichelt J."/>
            <person name="Scharfe M."/>
            <person name="Schoen O."/>
            <person name="Bargues M."/>
            <person name="Terol J."/>
            <person name="Climent J."/>
            <person name="Navarro P."/>
            <person name="Collado C."/>
            <person name="Perez-Perez A."/>
            <person name="Ottenwaelder B."/>
            <person name="Duchemin D."/>
            <person name="Cooke R."/>
            <person name="Laudie M."/>
            <person name="Berger-Llauro C."/>
            <person name="Purnelle B."/>
            <person name="Masuy D."/>
            <person name="de Haan M."/>
            <person name="Maarse A.C."/>
            <person name="Alcaraz J.-P."/>
            <person name="Cottet A."/>
            <person name="Casacuberta E."/>
            <person name="Monfort A."/>
            <person name="Argiriou A."/>
            <person name="Flores M."/>
            <person name="Liguori R."/>
            <person name="Vitale D."/>
            <person name="Mannhaupt G."/>
            <person name="Haase D."/>
            <person name="Schoof H."/>
            <person name="Rudd S."/>
            <person name="Zaccaria P."/>
            <person name="Mewes H.-W."/>
            <person name="Mayer K.F.X."/>
            <person name="Kaul S."/>
            <person name="Town C.D."/>
            <person name="Koo H.L."/>
            <person name="Tallon L.J."/>
            <person name="Jenkins J."/>
            <person name="Rooney T."/>
            <person name="Rizzo M."/>
            <person name="Walts A."/>
            <person name="Utterback T."/>
            <person name="Fujii C.Y."/>
            <person name="Shea T.P."/>
            <person name="Creasy T.H."/>
            <person name="Haas B."/>
            <person name="Maiti R."/>
            <person name="Wu D."/>
            <person name="Peterson J."/>
            <person name="Van Aken S."/>
            <person name="Pai G."/>
            <person name="Militscher J."/>
            <person name="Sellers P."/>
            <person name="Gill J.E."/>
            <person name="Feldblyum T.V."/>
            <person name="Preuss D."/>
            <person name="Lin X."/>
            <person name="Nierman W.C."/>
            <person name="Salzberg S.L."/>
            <person name="White O."/>
            <person name="Venter J.C."/>
            <person name="Fraser C.M."/>
            <person name="Kaneko T."/>
            <person name="Nakamura Y."/>
            <person name="Sato S."/>
            <person name="Kato T."/>
            <person name="Asamizu E."/>
            <person name="Sasamoto S."/>
            <person name="Kimura T."/>
            <person name="Idesawa K."/>
            <person name="Kawashima K."/>
            <person name="Kishida Y."/>
            <person name="Kiyokawa C."/>
            <person name="Kohara M."/>
            <person name="Matsumoto M."/>
            <person name="Matsuno A."/>
            <person name="Muraki A."/>
            <person name="Nakayama S."/>
            <person name="Nakazaki N."/>
            <person name="Shinpo S."/>
            <person name="Takeuchi C."/>
            <person name="Wada T."/>
            <person name="Watanabe A."/>
            <person name="Yamada M."/>
            <person name="Yasuda M."/>
            <person name="Tabata S."/>
        </authorList>
    </citation>
    <scope>NUCLEOTIDE SEQUENCE [LARGE SCALE GENOMIC DNA]</scope>
    <source>
        <strain>cv. Columbia</strain>
    </source>
</reference>
<reference key="3">
    <citation type="journal article" date="2017" name="Plant J.">
        <title>Araport11: a complete reannotation of the Arabidopsis thaliana reference genome.</title>
        <authorList>
            <person name="Cheng C.Y."/>
            <person name="Krishnakumar V."/>
            <person name="Chan A.P."/>
            <person name="Thibaud-Nissen F."/>
            <person name="Schobel S."/>
            <person name="Town C.D."/>
        </authorList>
    </citation>
    <scope>GENOME REANNOTATION</scope>
    <source>
        <strain>cv. Columbia</strain>
    </source>
</reference>
<reference key="4">
    <citation type="journal article" date="2012" name="Mol. Cell. Proteomics">
        <title>Comparative large-scale characterisation of plant vs. mammal proteins reveals similar and idiosyncratic N-alpha acetylation features.</title>
        <authorList>
            <person name="Bienvenut W.V."/>
            <person name="Sumpton D."/>
            <person name="Martinez A."/>
            <person name="Lilla S."/>
            <person name="Espagne C."/>
            <person name="Meinnel T."/>
            <person name="Giglione C."/>
        </authorList>
    </citation>
    <scope>ACETYLATION [LARGE SCALE ANALYSIS] AT SER-2</scope>
    <scope>CLEAVAGE OF INITIATOR METHIONINE [LARGE SCALE ANALYSIS]</scope>
    <scope>IDENTIFICATION BY MASS SPECTROMETRY [LARGE SCALE ANALYSIS]</scope>
</reference>
<protein>
    <recommendedName>
        <fullName>Polypyrimidine tract-binding protein homolog 1</fullName>
    </recommendedName>
</protein>
<accession>Q9MAC5</accession>
<accession>O82472</accession>
<proteinExistence type="evidence at protein level"/>
<feature type="initiator methionine" description="Removed" evidence="5">
    <location>
        <position position="1"/>
    </location>
</feature>
<feature type="chain" id="PRO_0000081741" description="Polypyrimidine tract-binding protein homolog 1">
    <location>
        <begin position="2"/>
        <end position="399"/>
    </location>
</feature>
<feature type="domain" description="RRM 1" evidence="2">
    <location>
        <begin position="17"/>
        <end position="95"/>
    </location>
</feature>
<feature type="domain" description="RRM 2" evidence="2">
    <location>
        <begin position="109"/>
        <end position="196"/>
    </location>
</feature>
<feature type="domain" description="RRM 3" evidence="2">
    <location>
        <begin position="242"/>
        <end position="322"/>
    </location>
</feature>
<feature type="region of interest" description="Disordered" evidence="3">
    <location>
        <begin position="352"/>
        <end position="399"/>
    </location>
</feature>
<feature type="compositionally biased region" description="Low complexity" evidence="3">
    <location>
        <begin position="365"/>
        <end position="384"/>
    </location>
</feature>
<feature type="modified residue" description="N-acetylserine" evidence="5">
    <location>
        <position position="2"/>
    </location>
</feature>
<comment type="function">
    <text evidence="1">Plays a role in pre-mRNA splicing. Binds to the polypyrimidine tract of introns. May promote the binding of U2 snRNP to pre-mRNA (By similarity).</text>
</comment>
<comment type="subcellular location">
    <subcellularLocation>
        <location evidence="4">Nucleus</location>
    </subcellularLocation>
</comment>
<comment type="alternative products">
    <event type="alternative splicing"/>
    <isoform>
        <id>Q9MAC5-1</id>
        <name>1</name>
        <sequence type="displayed"/>
    </isoform>
    <text>A number of isoforms are produced. According to EST sequences.</text>
</comment>
<comment type="sequence caution" evidence="4">
    <conflict type="frameshift">
        <sequence resource="EMBL-CDS" id="AAC62015"/>
    </conflict>
</comment>
<gene>
    <name type="primary">PTB</name>
    <name type="ordered locus">At3g01150</name>
    <name type="ORF">T4P13.16</name>
</gene>
<sequence length="399" mass="43593">MSSSGQTQFRYTQTPSKVVHLRNLPWECVEEELIDLCKRFGKIVNTKSNVGANRNQAFVEFADLNQAISMVSYYASSSEPAQIRGKTVYIQYSNRHEIVNNQSPGDVPGNVLLVTFEGVESHEVSIDVIHLVFSAFGFVHKIATFEKAAGFQALVQFTDVETASAARSALDGRSIPRYLLSAHVGSCSLRMSYSAHTDLNIKFQSHRSRDYTNPYLPVNQTAMDGSMQPALGADGKKVESQSNVLLGLIENMQYAVTVDVLHTVFSAYGTVQKIAIFEKNGSTQALIQYSDIPTAAMAKEALEGHCIYDGGYCKLRLSYSRHTDLNVKAFSDKSRDYTLPDLSLLVAQKGPAVSGSAPPAGWQNPQAQSQYSGYGGSPYMYPSSDPNGASPSGQPPYYG</sequence>
<organism>
    <name type="scientific">Arabidopsis thaliana</name>
    <name type="common">Mouse-ear cress</name>
    <dbReference type="NCBI Taxonomy" id="3702"/>
    <lineage>
        <taxon>Eukaryota</taxon>
        <taxon>Viridiplantae</taxon>
        <taxon>Streptophyta</taxon>
        <taxon>Embryophyta</taxon>
        <taxon>Tracheophyta</taxon>
        <taxon>Spermatophyta</taxon>
        <taxon>Magnoliopsida</taxon>
        <taxon>eudicotyledons</taxon>
        <taxon>Gunneridae</taxon>
        <taxon>Pentapetalae</taxon>
        <taxon>rosids</taxon>
        <taxon>malvids</taxon>
        <taxon>Brassicales</taxon>
        <taxon>Brassicaceae</taxon>
        <taxon>Camelineae</taxon>
        <taxon>Arabidopsis</taxon>
    </lineage>
</organism>
<dbReference type="EMBL" id="AF076924">
    <property type="protein sequence ID" value="AAC62015.1"/>
    <property type="status" value="ALT_FRAME"/>
    <property type="molecule type" value="mRNA"/>
</dbReference>
<dbReference type="EMBL" id="AC008261">
    <property type="protein sequence ID" value="AAF26159.1"/>
    <property type="molecule type" value="Genomic_DNA"/>
</dbReference>
<dbReference type="EMBL" id="CP002686">
    <property type="protein sequence ID" value="AEE73616.1"/>
    <property type="molecule type" value="Genomic_DNA"/>
</dbReference>
<dbReference type="PIR" id="T51814">
    <property type="entry name" value="T51814"/>
</dbReference>
<dbReference type="RefSeq" id="NP_186764.1">
    <molecule id="Q9MAC5-1"/>
    <property type="nucleotide sequence ID" value="NM_110980.4"/>
</dbReference>
<dbReference type="SMR" id="Q9MAC5"/>
<dbReference type="FunCoup" id="Q9MAC5">
    <property type="interactions" value="1034"/>
</dbReference>
<dbReference type="STRING" id="3702.Q9MAC5"/>
<dbReference type="iPTMnet" id="Q9MAC5"/>
<dbReference type="PaxDb" id="3702-AT3G01150.1"/>
<dbReference type="EnsemblPlants" id="AT3G01150.1">
    <molecule id="Q9MAC5-1"/>
    <property type="protein sequence ID" value="AT3G01150.1"/>
    <property type="gene ID" value="AT3G01150"/>
</dbReference>
<dbReference type="GeneID" id="821129"/>
<dbReference type="Gramene" id="AT3G01150.1">
    <molecule id="Q9MAC5-1"/>
    <property type="protein sequence ID" value="AT3G01150.1"/>
    <property type="gene ID" value="AT3G01150"/>
</dbReference>
<dbReference type="KEGG" id="ath:AT3G01150"/>
<dbReference type="Araport" id="AT3G01150"/>
<dbReference type="TAIR" id="AT3G01150">
    <property type="gene designation" value="PTB1"/>
</dbReference>
<dbReference type="eggNOG" id="KOG1190">
    <property type="taxonomic scope" value="Eukaryota"/>
</dbReference>
<dbReference type="HOGENOM" id="CLU_033500_0_0_1"/>
<dbReference type="InParanoid" id="Q9MAC5"/>
<dbReference type="OMA" id="QAAPMYH"/>
<dbReference type="OrthoDB" id="296632at2759"/>
<dbReference type="PhylomeDB" id="Q9MAC5"/>
<dbReference type="PRO" id="PR:Q9MAC5"/>
<dbReference type="Proteomes" id="UP000006548">
    <property type="component" value="Chromosome 3"/>
</dbReference>
<dbReference type="ExpressionAtlas" id="Q9MAC5">
    <property type="expression patterns" value="baseline and differential"/>
</dbReference>
<dbReference type="GO" id="GO:0005737">
    <property type="term" value="C:cytoplasm"/>
    <property type="evidence" value="ECO:0000314"/>
    <property type="project" value="TAIR"/>
</dbReference>
<dbReference type="GO" id="GO:0005634">
    <property type="term" value="C:nucleus"/>
    <property type="evidence" value="ECO:0000314"/>
    <property type="project" value="TAIR"/>
</dbReference>
<dbReference type="GO" id="GO:0000932">
    <property type="term" value="C:P-body"/>
    <property type="evidence" value="ECO:0000314"/>
    <property type="project" value="TAIR"/>
</dbReference>
<dbReference type="GO" id="GO:0003729">
    <property type="term" value="F:mRNA binding"/>
    <property type="evidence" value="ECO:0000314"/>
    <property type="project" value="TAIR"/>
</dbReference>
<dbReference type="GO" id="GO:0006397">
    <property type="term" value="P:mRNA processing"/>
    <property type="evidence" value="ECO:0007669"/>
    <property type="project" value="UniProtKB-KW"/>
</dbReference>
<dbReference type="GO" id="GO:0000381">
    <property type="term" value="P:regulation of alternative mRNA splicing, via spliceosome"/>
    <property type="evidence" value="ECO:0000315"/>
    <property type="project" value="TAIR"/>
</dbReference>
<dbReference type="GO" id="GO:0043484">
    <property type="term" value="P:regulation of RNA splicing"/>
    <property type="evidence" value="ECO:0000314"/>
    <property type="project" value="TAIR"/>
</dbReference>
<dbReference type="GO" id="GO:0006417">
    <property type="term" value="P:regulation of translation"/>
    <property type="evidence" value="ECO:0000270"/>
    <property type="project" value="TAIR"/>
</dbReference>
<dbReference type="GO" id="GO:0008380">
    <property type="term" value="P:RNA splicing"/>
    <property type="evidence" value="ECO:0007669"/>
    <property type="project" value="UniProtKB-KW"/>
</dbReference>
<dbReference type="GO" id="GO:0009845">
    <property type="term" value="P:seed germination"/>
    <property type="evidence" value="ECO:0000315"/>
    <property type="project" value="TAIR"/>
</dbReference>
<dbReference type="CDD" id="cd12686">
    <property type="entry name" value="RRM1_PTBPH1_PTBPH2"/>
    <property type="match status" value="1"/>
</dbReference>
<dbReference type="CDD" id="cd12691">
    <property type="entry name" value="RRM2_PTBPH1_PTBPH2"/>
    <property type="match status" value="1"/>
</dbReference>
<dbReference type="CDD" id="cd12690">
    <property type="entry name" value="RRM3_PTBPH1_PTBPH2"/>
    <property type="match status" value="1"/>
</dbReference>
<dbReference type="FunFam" id="3.30.70.330:FF:000260">
    <property type="entry name" value="Polypyrimidine tract-binding protein homolog 2"/>
    <property type="match status" value="1"/>
</dbReference>
<dbReference type="FunFam" id="3.30.70.330:FF:000324">
    <property type="entry name" value="Polypyrimidine tract-binding protein-like 2"/>
    <property type="match status" value="2"/>
</dbReference>
<dbReference type="Gene3D" id="3.30.70.330">
    <property type="match status" value="3"/>
</dbReference>
<dbReference type="InterPro" id="IPR012677">
    <property type="entry name" value="Nucleotide-bd_a/b_plait_sf"/>
</dbReference>
<dbReference type="InterPro" id="IPR021790">
    <property type="entry name" value="PTBP1-like_RRM2"/>
</dbReference>
<dbReference type="InterPro" id="IPR034792">
    <property type="entry name" value="PTBPH1/PTBPH2_RRM1"/>
</dbReference>
<dbReference type="InterPro" id="IPR034793">
    <property type="entry name" value="PTBPH1/PTBPH2_RRM2"/>
</dbReference>
<dbReference type="InterPro" id="IPR034794">
    <property type="entry name" value="PTBPH1/PTBPH2_RRM3"/>
</dbReference>
<dbReference type="InterPro" id="IPR035979">
    <property type="entry name" value="RBD_domain_sf"/>
</dbReference>
<dbReference type="InterPro" id="IPR000504">
    <property type="entry name" value="RRM_dom"/>
</dbReference>
<dbReference type="PANTHER" id="PTHR15592">
    <property type="entry name" value="MATRIN 3/NUCLEAR PROTEIN 220-RELATED"/>
    <property type="match status" value="1"/>
</dbReference>
<dbReference type="Pfam" id="PF00076">
    <property type="entry name" value="RRM_1"/>
    <property type="match status" value="1"/>
</dbReference>
<dbReference type="Pfam" id="PF13893">
    <property type="entry name" value="RRM_5"/>
    <property type="match status" value="1"/>
</dbReference>
<dbReference type="Pfam" id="PF11835">
    <property type="entry name" value="RRM_8"/>
    <property type="match status" value="1"/>
</dbReference>
<dbReference type="SMART" id="SM00360">
    <property type="entry name" value="RRM"/>
    <property type="match status" value="2"/>
</dbReference>
<dbReference type="SUPFAM" id="SSF54928">
    <property type="entry name" value="RNA-binding domain, RBD"/>
    <property type="match status" value="3"/>
</dbReference>
<dbReference type="PROSITE" id="PS50102">
    <property type="entry name" value="RRM"/>
    <property type="match status" value="2"/>
</dbReference>
<keyword id="KW-0007">Acetylation</keyword>
<keyword id="KW-0025">Alternative splicing</keyword>
<keyword id="KW-0507">mRNA processing</keyword>
<keyword id="KW-0508">mRNA splicing</keyword>
<keyword id="KW-0539">Nucleus</keyword>
<keyword id="KW-1185">Reference proteome</keyword>
<keyword id="KW-0677">Repeat</keyword>
<keyword id="KW-0694">RNA-binding</keyword>